<organism>
    <name type="scientific">Citrus sinensis</name>
    <name type="common">Sweet orange</name>
    <name type="synonym">Citrus aurantium var. sinensis</name>
    <dbReference type="NCBI Taxonomy" id="2711"/>
    <lineage>
        <taxon>Eukaryota</taxon>
        <taxon>Viridiplantae</taxon>
        <taxon>Streptophyta</taxon>
        <taxon>Embryophyta</taxon>
        <taxon>Tracheophyta</taxon>
        <taxon>Spermatophyta</taxon>
        <taxon>Magnoliopsida</taxon>
        <taxon>eudicotyledons</taxon>
        <taxon>Gunneridae</taxon>
        <taxon>Pentapetalae</taxon>
        <taxon>rosids</taxon>
        <taxon>malvids</taxon>
        <taxon>Sapindales</taxon>
        <taxon>Rutaceae</taxon>
        <taxon>Aurantioideae</taxon>
        <taxon>Citrus</taxon>
    </lineage>
</organism>
<geneLocation type="chloroplast"/>
<name>RR15_CITSI</name>
<comment type="subunit">
    <text evidence="1">Part of the 30S ribosomal subunit.</text>
</comment>
<comment type="subcellular location">
    <subcellularLocation>
        <location>Plastid</location>
        <location>Chloroplast</location>
    </subcellularLocation>
</comment>
<comment type="similarity">
    <text evidence="2">Belongs to the universal ribosomal protein uS15 family.</text>
</comment>
<sequence>MVKNAFISVRVQEKKEKNSGSVEFQVFRFTNTIRRLTSHLELHRKDYSSQRGLRKILEKRQRLLAYLSKKNRVRYKELISKLNIRESKNR</sequence>
<reference key="1">
    <citation type="journal article" date="2006" name="BMC Plant Biol.">
        <title>The complete chloroplast genome sequence of Citrus sinensis (L.) Osbeck var 'Ridge Pineapple': organization and phylogenetic relationships to other angiosperms.</title>
        <authorList>
            <person name="Bausher M.G."/>
            <person name="Singh N.D."/>
            <person name="Lee S.-B."/>
            <person name="Jansen R.K."/>
            <person name="Daniell H."/>
        </authorList>
    </citation>
    <scope>NUCLEOTIDE SEQUENCE [LARGE SCALE GENOMIC DNA]</scope>
    <source>
        <strain>cv. Osbeck var. Ridge Pineapple</strain>
    </source>
</reference>
<dbReference type="EMBL" id="DQ864733">
    <property type="protein sequence ID" value="ABI49078.1"/>
    <property type="molecule type" value="Genomic_DNA"/>
</dbReference>
<dbReference type="RefSeq" id="YP_740534.1">
    <property type="nucleotide sequence ID" value="NC_008334.1"/>
</dbReference>
<dbReference type="SMR" id="Q09MB9"/>
<dbReference type="GeneID" id="4271146"/>
<dbReference type="KEGG" id="cit:4271146"/>
<dbReference type="OrthoDB" id="150129at71240"/>
<dbReference type="GO" id="GO:0009507">
    <property type="term" value="C:chloroplast"/>
    <property type="evidence" value="ECO:0007669"/>
    <property type="project" value="UniProtKB-SubCell"/>
</dbReference>
<dbReference type="GO" id="GO:1990904">
    <property type="term" value="C:ribonucleoprotein complex"/>
    <property type="evidence" value="ECO:0007669"/>
    <property type="project" value="UniProtKB-KW"/>
</dbReference>
<dbReference type="GO" id="GO:0005840">
    <property type="term" value="C:ribosome"/>
    <property type="evidence" value="ECO:0007669"/>
    <property type="project" value="UniProtKB-KW"/>
</dbReference>
<dbReference type="GO" id="GO:0003735">
    <property type="term" value="F:structural constituent of ribosome"/>
    <property type="evidence" value="ECO:0007669"/>
    <property type="project" value="InterPro"/>
</dbReference>
<dbReference type="GO" id="GO:0006412">
    <property type="term" value="P:translation"/>
    <property type="evidence" value="ECO:0007669"/>
    <property type="project" value="UniProtKB-UniRule"/>
</dbReference>
<dbReference type="CDD" id="cd00353">
    <property type="entry name" value="Ribosomal_S15p_S13e"/>
    <property type="match status" value="1"/>
</dbReference>
<dbReference type="Gene3D" id="1.10.287.10">
    <property type="entry name" value="S15/NS1, RNA-binding"/>
    <property type="match status" value="1"/>
</dbReference>
<dbReference type="HAMAP" id="MF_01343_B">
    <property type="entry name" value="Ribosomal_uS15_B"/>
    <property type="match status" value="1"/>
</dbReference>
<dbReference type="InterPro" id="IPR000589">
    <property type="entry name" value="Ribosomal_uS15"/>
</dbReference>
<dbReference type="InterPro" id="IPR005290">
    <property type="entry name" value="Ribosomal_uS15_bac-type"/>
</dbReference>
<dbReference type="InterPro" id="IPR009068">
    <property type="entry name" value="uS15_NS1_RNA-bd_sf"/>
</dbReference>
<dbReference type="NCBIfam" id="TIGR00952">
    <property type="entry name" value="S15_bact"/>
    <property type="match status" value="1"/>
</dbReference>
<dbReference type="PANTHER" id="PTHR23321">
    <property type="entry name" value="RIBOSOMAL PROTEIN S15, BACTERIAL AND ORGANELLAR"/>
    <property type="match status" value="1"/>
</dbReference>
<dbReference type="PANTHER" id="PTHR23321:SF26">
    <property type="entry name" value="SMALL RIBOSOMAL SUBUNIT PROTEIN US15M"/>
    <property type="match status" value="1"/>
</dbReference>
<dbReference type="Pfam" id="PF00312">
    <property type="entry name" value="Ribosomal_S15"/>
    <property type="match status" value="1"/>
</dbReference>
<dbReference type="SMART" id="SM01387">
    <property type="entry name" value="Ribosomal_S15"/>
    <property type="match status" value="1"/>
</dbReference>
<dbReference type="SUPFAM" id="SSF47060">
    <property type="entry name" value="S15/NS1 RNA-binding domain"/>
    <property type="match status" value="1"/>
</dbReference>
<dbReference type="PROSITE" id="PS00362">
    <property type="entry name" value="RIBOSOMAL_S15"/>
    <property type="match status" value="1"/>
</dbReference>
<gene>
    <name type="primary">rps15</name>
</gene>
<proteinExistence type="inferred from homology"/>
<evidence type="ECO:0000250" key="1"/>
<evidence type="ECO:0000305" key="2"/>
<protein>
    <recommendedName>
        <fullName evidence="2">Small ribosomal subunit protein uS15c</fullName>
    </recommendedName>
    <alternativeName>
        <fullName>30S ribosomal protein S15, chloroplastic</fullName>
    </alternativeName>
</protein>
<accession>Q09MB9</accession>
<feature type="chain" id="PRO_0000276969" description="Small ribosomal subunit protein uS15c">
    <location>
        <begin position="1"/>
        <end position="90"/>
    </location>
</feature>
<keyword id="KW-0150">Chloroplast</keyword>
<keyword id="KW-0934">Plastid</keyword>
<keyword id="KW-0687">Ribonucleoprotein</keyword>
<keyword id="KW-0689">Ribosomal protein</keyword>